<name>AVR2A_MOUSE</name>
<proteinExistence type="evidence at protein level"/>
<reference key="1">
    <citation type="journal article" date="1991" name="Cell">
        <title>Expression cloning of an activin receptor, a predicted transmembrane serine kinase.</title>
        <authorList>
            <person name="Mathews L.S."/>
            <person name="Vale W.W."/>
        </authorList>
    </citation>
    <scope>NUCLEOTIDE SEQUENCE [MRNA]</scope>
    <scope>FUNCTION</scope>
    <scope>TISSUE SPECIFICITY</scope>
</reference>
<reference key="2">
    <citation type="journal article" date="1993" name="J. Biol. Chem.">
        <title>Characterization of type II activin receptors. Binding, processing, and phosphorylation.</title>
        <authorList>
            <person name="Mathews L.S."/>
            <person name="Vale W.W."/>
        </authorList>
    </citation>
    <scope>FUNCTION</scope>
    <scope>CATALYTIC ACTIVITY</scope>
</reference>
<reference key="3">
    <citation type="journal article" date="1999" name="Nat. Struct. Biol.">
        <title>Three-finger toxin fold for the extracellular ligand-binding domain of the type II activin receptor serine kinase.</title>
        <authorList>
            <person name="Greenwald J."/>
            <person name="Fischer W.H."/>
            <person name="Vale W.W."/>
            <person name="Choe S."/>
        </authorList>
    </citation>
    <scope>X-RAY CRYSTALLOGRAPHY (1.5 ANGSTROMS) OF 25-121</scope>
</reference>
<reference key="4">
    <citation type="journal article" date="1999" name="J. Protein Chem.">
        <title>The disulfide bond arrangement in the extracellular domain of the activin type II receptor.</title>
        <authorList>
            <person name="Fischer W.H."/>
            <person name="Greenwald J."/>
            <person name="Park M."/>
            <person name="Craig A.G."/>
            <person name="Choe S."/>
            <person name="Vale W."/>
        </authorList>
    </citation>
    <scope>DISULFIDE BONDS IN EXTRACELLULAR DOMAIN</scope>
</reference>
<reference key="5">
    <citation type="journal article" date="2000" name="J. Biol. Chem.">
        <title>Identification and characterization of a PDZ protein that interacts with activin types II receptors.</title>
        <authorList>
            <person name="Shoji H."/>
            <person name="Tsuchida K."/>
            <person name="Kishi H."/>
            <person name="Yamakawa N."/>
            <person name="Matsuzaki T."/>
            <person name="Liu Z."/>
            <person name="Nakamura T."/>
            <person name="Sugino H."/>
        </authorList>
    </citation>
    <scope>IDENTIFICATION IN A COMPLEX WITH MAGI2; ACVR1B AND SMAD3</scope>
    <scope>INTERACTION WITH MAGI2</scope>
</reference>
<reference key="6">
    <citation type="journal article" date="2013" name="FEBS J.">
        <title>Gdf6 induces commitment of pluripotent mesenchymal C3H10T1/2 cells to the adipocyte lineage.</title>
        <authorList>
            <person name="Wang S.S."/>
            <person name="Huang H.Y."/>
            <person name="Chen S.Z."/>
            <person name="Li X."/>
            <person name="Zhang W.T."/>
            <person name="Tang Q.Q."/>
        </authorList>
    </citation>
    <scope>FUNCTION</scope>
</reference>
<dbReference type="EC" id="2.7.11.30" evidence="11"/>
<dbReference type="EMBL" id="M65287">
    <property type="protein sequence ID" value="AAA37171.1"/>
    <property type="molecule type" value="mRNA"/>
</dbReference>
<dbReference type="CCDS" id="CCDS16021.1"/>
<dbReference type="PIR" id="A39896">
    <property type="entry name" value="A39896"/>
</dbReference>
<dbReference type="RefSeq" id="NP_031422.3">
    <property type="nucleotide sequence ID" value="NM_007396.4"/>
</dbReference>
<dbReference type="PDB" id="1BTE">
    <property type="method" value="X-ray"/>
    <property type="resolution" value="1.50 A"/>
    <property type="chains" value="A/B=25-121"/>
</dbReference>
<dbReference type="PDB" id="1LX5">
    <property type="method" value="X-ray"/>
    <property type="resolution" value="3.30 A"/>
    <property type="chains" value="B=20-121"/>
</dbReference>
<dbReference type="PDB" id="2GOO">
    <property type="method" value="X-ray"/>
    <property type="resolution" value="2.20 A"/>
    <property type="chains" value="C/F=20-121"/>
</dbReference>
<dbReference type="PDBsum" id="1BTE"/>
<dbReference type="PDBsum" id="1LX5"/>
<dbReference type="PDBsum" id="2GOO"/>
<dbReference type="SMR" id="P27038"/>
<dbReference type="BioGRID" id="197955">
    <property type="interactions" value="9"/>
</dbReference>
<dbReference type="CORUM" id="P27038"/>
<dbReference type="DIP" id="DIP-5825N"/>
<dbReference type="FunCoup" id="P27038">
    <property type="interactions" value="1713"/>
</dbReference>
<dbReference type="IntAct" id="P27038">
    <property type="interactions" value="3"/>
</dbReference>
<dbReference type="STRING" id="10090.ENSMUSP00000067305"/>
<dbReference type="GlyCosmos" id="P27038">
    <property type="glycosylation" value="2 sites, No reported glycans"/>
</dbReference>
<dbReference type="GlyGen" id="P27038">
    <property type="glycosylation" value="3 sites, 3 N-linked glycans (3 sites)"/>
</dbReference>
<dbReference type="iPTMnet" id="P27038"/>
<dbReference type="PhosphoSitePlus" id="P27038"/>
<dbReference type="PaxDb" id="10090-ENSMUSP00000067305"/>
<dbReference type="ProteomicsDB" id="273507"/>
<dbReference type="Antibodypedia" id="18817">
    <property type="antibodies" value="488 antibodies from 38 providers"/>
</dbReference>
<dbReference type="DNASU" id="11480"/>
<dbReference type="Ensembl" id="ENSMUST00000063886.4">
    <property type="protein sequence ID" value="ENSMUSP00000067305.4"/>
    <property type="gene ID" value="ENSMUSG00000052155.6"/>
</dbReference>
<dbReference type="GeneID" id="11480"/>
<dbReference type="KEGG" id="mmu:11480"/>
<dbReference type="UCSC" id="uc008jpn.2">
    <property type="organism name" value="mouse"/>
</dbReference>
<dbReference type="AGR" id="MGI:102806"/>
<dbReference type="CTD" id="92"/>
<dbReference type="MGI" id="MGI:102806">
    <property type="gene designation" value="Acvr2a"/>
</dbReference>
<dbReference type="VEuPathDB" id="HostDB:ENSMUSG00000052155"/>
<dbReference type="eggNOG" id="KOG3653">
    <property type="taxonomic scope" value="Eukaryota"/>
</dbReference>
<dbReference type="GeneTree" id="ENSGT00940000157233"/>
<dbReference type="HOGENOM" id="CLU_000288_8_4_1"/>
<dbReference type="InParanoid" id="P27038"/>
<dbReference type="OMA" id="CNQNFTW"/>
<dbReference type="OrthoDB" id="547665at2759"/>
<dbReference type="PhylomeDB" id="P27038"/>
<dbReference type="TreeFam" id="TF352876"/>
<dbReference type="BRENDA" id="2.7.10.2">
    <property type="organism ID" value="3474"/>
</dbReference>
<dbReference type="Reactome" id="R-MMU-1502540">
    <property type="pathway name" value="Signaling by Activin"/>
</dbReference>
<dbReference type="Reactome" id="R-MMU-201451">
    <property type="pathway name" value="Signaling by BMP"/>
</dbReference>
<dbReference type="Reactome" id="R-MMU-9839406">
    <property type="pathway name" value="TGFBR3 regulates activin signaling"/>
</dbReference>
<dbReference type="BioGRID-ORCS" id="11480">
    <property type="hits" value="1 hit in 80 CRISPR screens"/>
</dbReference>
<dbReference type="ChiTaRS" id="Acvr2a">
    <property type="organism name" value="mouse"/>
</dbReference>
<dbReference type="EvolutionaryTrace" id="P27038"/>
<dbReference type="PRO" id="PR:P27038"/>
<dbReference type="Proteomes" id="UP000000589">
    <property type="component" value="Chromosome 2"/>
</dbReference>
<dbReference type="RNAct" id="P27038">
    <property type="molecule type" value="protein"/>
</dbReference>
<dbReference type="Bgee" id="ENSMUSG00000052155">
    <property type="expression patterns" value="Expressed in trigeminal ganglion and 276 other cell types or tissues"/>
</dbReference>
<dbReference type="ExpressionAtlas" id="P27038">
    <property type="expression patterns" value="baseline and differential"/>
</dbReference>
<dbReference type="GO" id="GO:0009986">
    <property type="term" value="C:cell surface"/>
    <property type="evidence" value="ECO:0000314"/>
    <property type="project" value="UniProtKB"/>
</dbReference>
<dbReference type="GO" id="GO:0005737">
    <property type="term" value="C:cytoplasm"/>
    <property type="evidence" value="ECO:0007669"/>
    <property type="project" value="Ensembl"/>
</dbReference>
<dbReference type="GO" id="GO:0034673">
    <property type="term" value="C:inhibin-betaglycan-ActRII complex"/>
    <property type="evidence" value="ECO:0007669"/>
    <property type="project" value="Ensembl"/>
</dbReference>
<dbReference type="GO" id="GO:0005886">
    <property type="term" value="C:plasma membrane"/>
    <property type="evidence" value="ECO:0000314"/>
    <property type="project" value="UniProtKB"/>
</dbReference>
<dbReference type="GO" id="GO:0043235">
    <property type="term" value="C:receptor complex"/>
    <property type="evidence" value="ECO:0007669"/>
    <property type="project" value="Ensembl"/>
</dbReference>
<dbReference type="GO" id="GO:0048185">
    <property type="term" value="F:activin binding"/>
    <property type="evidence" value="ECO:0000353"/>
    <property type="project" value="MGI"/>
</dbReference>
<dbReference type="GO" id="GO:0017002">
    <property type="term" value="F:activin receptor activity"/>
    <property type="evidence" value="ECO:0000314"/>
    <property type="project" value="UniProtKB"/>
</dbReference>
<dbReference type="GO" id="GO:0016361">
    <property type="term" value="F:activin receptor activity, type I"/>
    <property type="evidence" value="ECO:0007669"/>
    <property type="project" value="Ensembl"/>
</dbReference>
<dbReference type="GO" id="GO:0016362">
    <property type="term" value="F:activin receptor activity, type II"/>
    <property type="evidence" value="ECO:0007669"/>
    <property type="project" value="Ensembl"/>
</dbReference>
<dbReference type="GO" id="GO:0005524">
    <property type="term" value="F:ATP binding"/>
    <property type="evidence" value="ECO:0007669"/>
    <property type="project" value="UniProtKB-KW"/>
</dbReference>
<dbReference type="GO" id="GO:0098821">
    <property type="term" value="F:BMP receptor activity"/>
    <property type="evidence" value="ECO:0000315"/>
    <property type="project" value="UniProtKB"/>
</dbReference>
<dbReference type="GO" id="GO:0015026">
    <property type="term" value="F:coreceptor activity"/>
    <property type="evidence" value="ECO:0007669"/>
    <property type="project" value="Ensembl"/>
</dbReference>
<dbReference type="GO" id="GO:0019838">
    <property type="term" value="F:growth factor binding"/>
    <property type="evidence" value="ECO:0000315"/>
    <property type="project" value="MGI"/>
</dbReference>
<dbReference type="GO" id="GO:0042802">
    <property type="term" value="F:identical protein binding"/>
    <property type="evidence" value="ECO:0000353"/>
    <property type="project" value="MGI"/>
</dbReference>
<dbReference type="GO" id="GO:0034711">
    <property type="term" value="F:inhibin binding"/>
    <property type="evidence" value="ECO:0000353"/>
    <property type="project" value="BHF-UCL"/>
</dbReference>
<dbReference type="GO" id="GO:0046872">
    <property type="term" value="F:metal ion binding"/>
    <property type="evidence" value="ECO:0007669"/>
    <property type="project" value="UniProtKB-KW"/>
</dbReference>
<dbReference type="GO" id="GO:0030165">
    <property type="term" value="F:PDZ domain binding"/>
    <property type="evidence" value="ECO:0000353"/>
    <property type="project" value="UniProtKB"/>
</dbReference>
<dbReference type="GO" id="GO:0004674">
    <property type="term" value="F:protein serine/threonine kinase activity"/>
    <property type="evidence" value="ECO:0000304"/>
    <property type="project" value="Reactome"/>
</dbReference>
<dbReference type="GO" id="GO:0009952">
    <property type="term" value="P:anterior/posterior pattern specification"/>
    <property type="evidence" value="ECO:0000316"/>
    <property type="project" value="MGI"/>
</dbReference>
<dbReference type="GO" id="GO:0030509">
    <property type="term" value="P:BMP signaling pathway"/>
    <property type="evidence" value="ECO:0000315"/>
    <property type="project" value="UniProtKB"/>
</dbReference>
<dbReference type="GO" id="GO:0007368">
    <property type="term" value="P:determination of left/right symmetry"/>
    <property type="evidence" value="ECO:0000316"/>
    <property type="project" value="MGI"/>
</dbReference>
<dbReference type="GO" id="GO:0048706">
    <property type="term" value="P:embryonic skeletal system development"/>
    <property type="evidence" value="ECO:0000315"/>
    <property type="project" value="MGI"/>
</dbReference>
<dbReference type="GO" id="GO:0001702">
    <property type="term" value="P:gastrulation with mouth forming second"/>
    <property type="evidence" value="ECO:0000316"/>
    <property type="project" value="MGI"/>
</dbReference>
<dbReference type="GO" id="GO:0008584">
    <property type="term" value="P:male gonad development"/>
    <property type="evidence" value="ECO:0000315"/>
    <property type="project" value="MGI"/>
</dbReference>
<dbReference type="GO" id="GO:0007498">
    <property type="term" value="P:mesoderm development"/>
    <property type="evidence" value="ECO:0000316"/>
    <property type="project" value="MGI"/>
</dbReference>
<dbReference type="GO" id="GO:0042475">
    <property type="term" value="P:odontogenesis of dentin-containing tooth"/>
    <property type="evidence" value="ECO:0000316"/>
    <property type="project" value="MGI"/>
</dbReference>
<dbReference type="GO" id="GO:0001649">
    <property type="term" value="P:osteoblast differentiation"/>
    <property type="evidence" value="ECO:0007669"/>
    <property type="project" value="Ensembl"/>
</dbReference>
<dbReference type="GO" id="GO:0043084">
    <property type="term" value="P:penile erection"/>
    <property type="evidence" value="ECO:0000315"/>
    <property type="project" value="MGI"/>
</dbReference>
<dbReference type="GO" id="GO:0032927">
    <property type="term" value="P:positive regulation of activin receptor signaling pathway"/>
    <property type="evidence" value="ECO:0007669"/>
    <property type="project" value="Ensembl"/>
</dbReference>
<dbReference type="GO" id="GO:0030501">
    <property type="term" value="P:positive regulation of bone mineralization"/>
    <property type="evidence" value="ECO:0007669"/>
    <property type="project" value="Ensembl"/>
</dbReference>
<dbReference type="GO" id="GO:0045648">
    <property type="term" value="P:positive regulation of erythrocyte differentiation"/>
    <property type="evidence" value="ECO:0007669"/>
    <property type="project" value="Ensembl"/>
</dbReference>
<dbReference type="GO" id="GO:0045669">
    <property type="term" value="P:positive regulation of osteoblast differentiation"/>
    <property type="evidence" value="ECO:0007669"/>
    <property type="project" value="Ensembl"/>
</dbReference>
<dbReference type="GO" id="GO:0060391">
    <property type="term" value="P:positive regulation of SMAD protein signal transduction"/>
    <property type="evidence" value="ECO:0007669"/>
    <property type="project" value="Ensembl"/>
</dbReference>
<dbReference type="GO" id="GO:0045944">
    <property type="term" value="P:positive regulation of transcription by RNA polymerase II"/>
    <property type="evidence" value="ECO:0007669"/>
    <property type="project" value="Ensembl"/>
</dbReference>
<dbReference type="GO" id="GO:0045428">
    <property type="term" value="P:regulation of nitric oxide biosynthetic process"/>
    <property type="evidence" value="ECO:0000315"/>
    <property type="project" value="MGI"/>
</dbReference>
<dbReference type="GO" id="GO:0009966">
    <property type="term" value="P:regulation of signal transduction"/>
    <property type="evidence" value="ECO:0000314"/>
    <property type="project" value="MGI"/>
</dbReference>
<dbReference type="GO" id="GO:0060011">
    <property type="term" value="P:Sertoli cell proliferation"/>
    <property type="evidence" value="ECO:0000315"/>
    <property type="project" value="MGI"/>
</dbReference>
<dbReference type="GO" id="GO:0042713">
    <property type="term" value="P:sperm ejaculation"/>
    <property type="evidence" value="ECO:0000315"/>
    <property type="project" value="MGI"/>
</dbReference>
<dbReference type="GO" id="GO:0007283">
    <property type="term" value="P:spermatogenesis"/>
    <property type="evidence" value="ECO:0000316"/>
    <property type="project" value="MGI"/>
</dbReference>
<dbReference type="CDD" id="cd14141">
    <property type="entry name" value="STKc_ACVR2a"/>
    <property type="match status" value="1"/>
</dbReference>
<dbReference type="CDD" id="cd23631">
    <property type="entry name" value="TFP_LU_ECD_ACVR2A"/>
    <property type="match status" value="1"/>
</dbReference>
<dbReference type="FunFam" id="1.10.510.10:FF:000099">
    <property type="entry name" value="Serine/threonine-protein kinase receptor"/>
    <property type="match status" value="1"/>
</dbReference>
<dbReference type="FunFam" id="2.10.60.10:FF:000002">
    <property type="entry name" value="Serine/threonine-protein kinase receptor"/>
    <property type="match status" value="1"/>
</dbReference>
<dbReference type="FunFam" id="3.30.200.20:FF:000094">
    <property type="entry name" value="Serine/threonine-protein kinase receptor"/>
    <property type="match status" value="1"/>
</dbReference>
<dbReference type="Gene3D" id="2.10.60.10">
    <property type="entry name" value="CD59"/>
    <property type="match status" value="1"/>
</dbReference>
<dbReference type="Gene3D" id="3.30.200.20">
    <property type="entry name" value="Phosphorylase Kinase, domain 1"/>
    <property type="match status" value="1"/>
</dbReference>
<dbReference type="Gene3D" id="1.10.510.10">
    <property type="entry name" value="Transferase(Phosphotransferase) domain 1"/>
    <property type="match status" value="1"/>
</dbReference>
<dbReference type="InterPro" id="IPR000472">
    <property type="entry name" value="Activin_recp"/>
</dbReference>
<dbReference type="InterPro" id="IPR011009">
    <property type="entry name" value="Kinase-like_dom_sf"/>
</dbReference>
<dbReference type="InterPro" id="IPR000719">
    <property type="entry name" value="Prot_kinase_dom"/>
</dbReference>
<dbReference type="InterPro" id="IPR008271">
    <property type="entry name" value="Ser/Thr_kinase_AS"/>
</dbReference>
<dbReference type="InterPro" id="IPR045860">
    <property type="entry name" value="Snake_toxin-like_sf"/>
</dbReference>
<dbReference type="InterPro" id="IPR000333">
    <property type="entry name" value="TGFB_receptor"/>
</dbReference>
<dbReference type="PANTHER" id="PTHR23255:SF64">
    <property type="entry name" value="ACTIVIN RECEPTOR TYPE-2A"/>
    <property type="match status" value="1"/>
</dbReference>
<dbReference type="PANTHER" id="PTHR23255">
    <property type="entry name" value="TRANSFORMING GROWTH FACTOR-BETA RECEPTOR TYPE I AND II"/>
    <property type="match status" value="1"/>
</dbReference>
<dbReference type="Pfam" id="PF01064">
    <property type="entry name" value="Activin_recp"/>
    <property type="match status" value="1"/>
</dbReference>
<dbReference type="Pfam" id="PF00069">
    <property type="entry name" value="Pkinase"/>
    <property type="match status" value="1"/>
</dbReference>
<dbReference type="PRINTS" id="PR00653">
    <property type="entry name" value="ACTIVIN2R"/>
</dbReference>
<dbReference type="SMART" id="SM00220">
    <property type="entry name" value="S_TKc"/>
    <property type="match status" value="1"/>
</dbReference>
<dbReference type="SUPFAM" id="SSF56112">
    <property type="entry name" value="Protein kinase-like (PK-like)"/>
    <property type="match status" value="1"/>
</dbReference>
<dbReference type="SUPFAM" id="SSF57302">
    <property type="entry name" value="Snake toxin-like"/>
    <property type="match status" value="1"/>
</dbReference>
<dbReference type="PROSITE" id="PS50011">
    <property type="entry name" value="PROTEIN_KINASE_DOM"/>
    <property type="match status" value="1"/>
</dbReference>
<dbReference type="PROSITE" id="PS00108">
    <property type="entry name" value="PROTEIN_KINASE_ST"/>
    <property type="match status" value="1"/>
</dbReference>
<accession>P27038</accession>
<organism>
    <name type="scientific">Mus musculus</name>
    <name type="common">Mouse</name>
    <dbReference type="NCBI Taxonomy" id="10090"/>
    <lineage>
        <taxon>Eukaryota</taxon>
        <taxon>Metazoa</taxon>
        <taxon>Chordata</taxon>
        <taxon>Craniata</taxon>
        <taxon>Vertebrata</taxon>
        <taxon>Euteleostomi</taxon>
        <taxon>Mammalia</taxon>
        <taxon>Eutheria</taxon>
        <taxon>Euarchontoglires</taxon>
        <taxon>Glires</taxon>
        <taxon>Rodentia</taxon>
        <taxon>Myomorpha</taxon>
        <taxon>Muroidea</taxon>
        <taxon>Muridae</taxon>
        <taxon>Murinae</taxon>
        <taxon>Mus</taxon>
        <taxon>Mus</taxon>
    </lineage>
</organism>
<feature type="signal peptide" evidence="3">
    <location>
        <begin position="1"/>
        <end position="19"/>
    </location>
</feature>
<feature type="chain" id="PRO_0000024399" description="Activin receptor type-2A">
    <location>
        <begin position="20"/>
        <end position="513"/>
    </location>
</feature>
<feature type="topological domain" description="Extracellular" evidence="3">
    <location>
        <begin position="20"/>
        <end position="135"/>
    </location>
</feature>
<feature type="transmembrane region" description="Helical" evidence="3">
    <location>
        <begin position="136"/>
        <end position="161"/>
    </location>
</feature>
<feature type="topological domain" description="Cytoplasmic" evidence="3">
    <location>
        <begin position="162"/>
        <end position="513"/>
    </location>
</feature>
<feature type="domain" description="Protein kinase" evidence="4">
    <location>
        <begin position="192"/>
        <end position="485"/>
    </location>
</feature>
<feature type="active site" description="Proton acceptor" evidence="4 6">
    <location>
        <position position="322"/>
    </location>
</feature>
<feature type="binding site" evidence="4">
    <location>
        <begin position="198"/>
        <end position="206"/>
    </location>
    <ligand>
        <name>ATP</name>
        <dbReference type="ChEBI" id="CHEBI:30616"/>
    </ligand>
</feature>
<feature type="binding site" evidence="4">
    <location>
        <position position="219"/>
    </location>
    <ligand>
        <name>ATP</name>
        <dbReference type="ChEBI" id="CHEBI:30616"/>
    </ligand>
</feature>
<feature type="glycosylation site" description="N-linked (GlcNAc...) asparagine" evidence="5">
    <location>
        <position position="43"/>
    </location>
</feature>
<feature type="glycosylation site" description="N-linked (GlcNAc...) asparagine" evidence="5">
    <location>
        <position position="66"/>
    </location>
</feature>
<feature type="disulfide bond" evidence="7">
    <location>
        <begin position="30"/>
        <end position="60"/>
    </location>
</feature>
<feature type="disulfide bond" evidence="7">
    <location>
        <begin position="50"/>
        <end position="78"/>
    </location>
</feature>
<feature type="disulfide bond" evidence="7">
    <location>
        <begin position="85"/>
        <end position="104"/>
    </location>
</feature>
<feature type="disulfide bond" evidence="7">
    <location>
        <begin position="91"/>
        <end position="103"/>
    </location>
</feature>
<feature type="disulfide bond" evidence="7">
    <location>
        <begin position="105"/>
        <end position="110"/>
    </location>
</feature>
<feature type="strand" evidence="15">
    <location>
        <begin position="29"/>
        <end position="34"/>
    </location>
</feature>
<feature type="helix" evidence="15">
    <location>
        <begin position="37"/>
        <end position="40"/>
    </location>
</feature>
<feature type="strand" evidence="15">
    <location>
        <begin position="44"/>
        <end position="49"/>
    </location>
</feature>
<feature type="strand" evidence="15">
    <location>
        <begin position="59"/>
        <end position="67"/>
    </location>
</feature>
<feature type="strand" evidence="15">
    <location>
        <begin position="70"/>
        <end position="79"/>
    </location>
</feature>
<feature type="helix" evidence="16">
    <location>
        <begin position="83"/>
        <end position="85"/>
    </location>
</feature>
<feature type="strand" evidence="15">
    <location>
        <begin position="88"/>
        <end position="93"/>
    </location>
</feature>
<feature type="strand" evidence="15">
    <location>
        <begin position="95"/>
        <end position="97"/>
    </location>
</feature>
<feature type="strand" evidence="15">
    <location>
        <begin position="99"/>
        <end position="105"/>
    </location>
</feature>
<feature type="helix" evidence="15">
    <location>
        <begin position="110"/>
        <end position="112"/>
    </location>
</feature>
<feature type="strand" evidence="15">
    <location>
        <begin position="113"/>
        <end position="116"/>
    </location>
</feature>
<gene>
    <name evidence="14" type="primary">Acvr2a</name>
    <name type="synonym">Acvr2</name>
</gene>
<protein>
    <recommendedName>
        <fullName evidence="13">Activin receptor type-2A</fullName>
        <ecNumber evidence="11">2.7.11.30</ecNumber>
    </recommendedName>
    <alternativeName>
        <fullName>Activin receptor type IIA</fullName>
        <shortName>ACTR-IIA</shortName>
    </alternativeName>
</protein>
<keyword id="KW-0002">3D-structure</keyword>
<keyword id="KW-0067">ATP-binding</keyword>
<keyword id="KW-1003">Cell membrane</keyword>
<keyword id="KW-1015">Disulfide bond</keyword>
<keyword id="KW-0325">Glycoprotein</keyword>
<keyword id="KW-0418">Kinase</keyword>
<keyword id="KW-0460">Magnesium</keyword>
<keyword id="KW-0464">Manganese</keyword>
<keyword id="KW-0472">Membrane</keyword>
<keyword id="KW-0479">Metal-binding</keyword>
<keyword id="KW-0547">Nucleotide-binding</keyword>
<keyword id="KW-0675">Receptor</keyword>
<keyword id="KW-1185">Reference proteome</keyword>
<keyword id="KW-0723">Serine/threonine-protein kinase</keyword>
<keyword id="KW-0732">Signal</keyword>
<keyword id="KW-0808">Transferase</keyword>
<keyword id="KW-0812">Transmembrane</keyword>
<keyword id="KW-1133">Transmembrane helix</keyword>
<comment type="function">
    <text evidence="9 10 11">On ligand binding, forms a receptor complex consisting of two type II and two type I transmembrane serine/threonine kinases. Type II receptors phosphorylate and activate type I receptors which autophosphorylate, then bind and activate SMAD transcriptional regulators. Receptor for activin A, activin B and inhibin A. Mediates induction of adipogenesis by GDF6 (PubMed:23527555).</text>
</comment>
<comment type="catalytic activity">
    <reaction evidence="11">
        <text>L-threonyl-[receptor-protein] + ATP = O-phospho-L-threonyl-[receptor-protein] + ADP + H(+)</text>
        <dbReference type="Rhea" id="RHEA:44880"/>
        <dbReference type="Rhea" id="RHEA-COMP:11024"/>
        <dbReference type="Rhea" id="RHEA-COMP:11025"/>
        <dbReference type="ChEBI" id="CHEBI:15378"/>
        <dbReference type="ChEBI" id="CHEBI:30013"/>
        <dbReference type="ChEBI" id="CHEBI:30616"/>
        <dbReference type="ChEBI" id="CHEBI:61977"/>
        <dbReference type="ChEBI" id="CHEBI:456216"/>
        <dbReference type="EC" id="2.7.11.30"/>
    </reaction>
    <physiologicalReaction direction="left-to-right" evidence="13">
        <dbReference type="Rhea" id="RHEA:44881"/>
    </physiologicalReaction>
</comment>
<comment type="catalytic activity">
    <reaction evidence="11">
        <text>L-seryl-[receptor-protein] + ATP = O-phospho-L-seryl-[receptor-protein] + ADP + H(+)</text>
        <dbReference type="Rhea" id="RHEA:18673"/>
        <dbReference type="Rhea" id="RHEA-COMP:11022"/>
        <dbReference type="Rhea" id="RHEA-COMP:11023"/>
        <dbReference type="ChEBI" id="CHEBI:15378"/>
        <dbReference type="ChEBI" id="CHEBI:29999"/>
        <dbReference type="ChEBI" id="CHEBI:30616"/>
        <dbReference type="ChEBI" id="CHEBI:83421"/>
        <dbReference type="ChEBI" id="CHEBI:456216"/>
        <dbReference type="EC" id="2.7.11.30"/>
    </reaction>
    <physiologicalReaction direction="left-to-right" evidence="13">
        <dbReference type="Rhea" id="RHEA:18674"/>
    </physiologicalReaction>
</comment>
<comment type="cofactor">
    <cofactor evidence="1">
        <name>Mg(2+)</name>
        <dbReference type="ChEBI" id="CHEBI:18420"/>
    </cofactor>
    <cofactor evidence="1">
        <name>Mn(2+)</name>
        <dbReference type="ChEBI" id="CHEBI:29035"/>
    </cofactor>
</comment>
<comment type="subunit">
    <text evidence="2 8">Part of a complex consisting of MAGI2/ARIP1, ACVR2A, ACVR1B and SMAD3 (PubMed:10681527). Interacts with MAGI2/ARIP1 (PubMed:10681527). Interacts with type I receptor ACVR1 (By similarity). Interacts with BMP7 (By similarity). Interacts with TSC22D1/TSC-22 (By similarity). Interacts with activin A/INHBA (By similarity).</text>
</comment>
<comment type="interaction">
    <interactant intactId="EBI-1036102">
        <id>P27038</id>
    </interactant>
    <interactant intactId="EBI-1029262">
        <id>P12643</id>
        <label>BMP2</label>
    </interactant>
    <organismsDiffer>true</organismsDiffer>
    <experiments>2</experiments>
</comment>
<comment type="subcellular location">
    <subcellularLocation>
        <location evidence="9">Cell membrane</location>
        <topology evidence="3">Single-pass type I membrane protein</topology>
    </subcellularLocation>
</comment>
<comment type="tissue specificity">
    <text evidence="9">Brain, testis, intestine, liver and kidney.</text>
</comment>
<comment type="similarity">
    <text evidence="12">Belongs to the protein kinase superfamily. TKL Ser/Thr protein kinase family. TGFB receptor subfamily.</text>
</comment>
<evidence type="ECO:0000250" key="1"/>
<evidence type="ECO:0000250" key="2">
    <source>
        <dbReference type="UniProtKB" id="P27037"/>
    </source>
</evidence>
<evidence type="ECO:0000255" key="3"/>
<evidence type="ECO:0000255" key="4">
    <source>
        <dbReference type="PROSITE-ProRule" id="PRU00159"/>
    </source>
</evidence>
<evidence type="ECO:0000255" key="5">
    <source>
        <dbReference type="PROSITE-ProRule" id="PRU00498"/>
    </source>
</evidence>
<evidence type="ECO:0000255" key="6">
    <source>
        <dbReference type="PROSITE-ProRule" id="PRU10027"/>
    </source>
</evidence>
<evidence type="ECO:0000269" key="7">
    <source>
    </source>
</evidence>
<evidence type="ECO:0000269" key="8">
    <source>
    </source>
</evidence>
<evidence type="ECO:0000269" key="9">
    <source>
    </source>
</evidence>
<evidence type="ECO:0000269" key="10">
    <source>
    </source>
</evidence>
<evidence type="ECO:0000269" key="11">
    <source>
    </source>
</evidence>
<evidence type="ECO:0000305" key="12"/>
<evidence type="ECO:0000305" key="13">
    <source>
    </source>
</evidence>
<evidence type="ECO:0000312" key="14">
    <source>
        <dbReference type="MGI" id="MGI:102806"/>
    </source>
</evidence>
<evidence type="ECO:0007829" key="15">
    <source>
        <dbReference type="PDB" id="1BTE"/>
    </source>
</evidence>
<evidence type="ECO:0007829" key="16">
    <source>
        <dbReference type="PDB" id="2GOO"/>
    </source>
</evidence>
<sequence length="513" mass="57890">MGAAAKLAFAVFLISCSSGAILGRSETQECLFFNANWERDRTNQTGVEPCYGDKDKRRHCFATWKNISGSIEIVKQGCWLDDINCYDRTDCIEKKDSPEVYFCCCEGNMCNEKFSYFPEMEVTQPTSNPVTPKPPYYNILLYSLVPLMLIAGIVICAFWVYRHHKMAYPPVLVPTQDPGPPPPSPLLGLKPLQLLEVKARGRFGCVWKAQLLNEYVAVKIFPIQDKQSWQNEYEVYSLPGMKHENILQFIGAEKRGTSVDVDLWLITAFHEKGSLSDFLKANVVSWNELCHIAETMARGLAYLHEDIPGLKDGHKPAISHRDIKSKNVLLKNNLTACIADFGLALKFEAGKSAGDTHGQVGTRRYMAPEVLEGAINFQRDAFLRIDMYAMGLVLWELASRCTAADGPVDEYMLPFEEEIGQHPSLEDMQEVVVHKKKRPVLRDYWQKHAGMAMLCETIEECWDHDAEARLSAGCVGERITQMQRLTNIITTEDIVTVVTMVTNVDFPPKESSL</sequence>